<accession>P0C621</accession>
<accession>P13452</accession>
<proteinExistence type="inferred from homology"/>
<sequence>MATHVAIIGNGVGGFTTAQALRAEGFEGRISLIGDEPHLPYDRPSLSKAVLDGSLERPPILAEADWYGEARIDMLTGPEVTALDVQTRTISLDDGTTLSADAIVIATGSRARTMALPGSQLPGVVTLRTYGDVQVLRDSWTSATRLLIVGGGLIGCEVATTARKLGLSVTILEAGDELLVRVLGRRIGAWLRGLLTELGVQVELGTGVVGFSGEGQLEQVMASDGRSFVADSALICVGAEPADQLARQAGLACDRGVIVDHCGATLAKGYSPSEMWPVGAAAGGRRSLETYMNAQRQAAAVAAAILGKNVSAPQLPVSWTEIAGHRMQMAGDIEGPGDFVSRGMPGSGAALLFRLQERRIQAVVAVDAPRDFALATRLVEARAAIEPARLADLSNSMRDFVRANEGDLT</sequence>
<evidence type="ECO:0000250" key="1"/>
<evidence type="ECO:0000255" key="2"/>
<evidence type="ECO:0000305" key="3"/>
<organism>
    <name type="scientific">Pseudomonas putida</name>
    <name type="common">Arthrobacter siderocapsulatus</name>
    <dbReference type="NCBI Taxonomy" id="303"/>
    <lineage>
        <taxon>Bacteria</taxon>
        <taxon>Pseudomonadati</taxon>
        <taxon>Pseudomonadota</taxon>
        <taxon>Gammaproteobacteria</taxon>
        <taxon>Pseudomonadales</taxon>
        <taxon>Pseudomonadaceae</taxon>
        <taxon>Pseudomonas</taxon>
    </lineage>
</organism>
<reference key="1">
    <citation type="journal article" date="1987" name="J. Bacteriol.">
        <title>Nucleotide sequencing and characterization of the genes encoding benzene oxidation enzymes of Pseudomonas putida.</title>
        <authorList>
            <person name="Irie S."/>
            <person name="Doi S."/>
            <person name="Yorifuji T."/>
            <person name="Takagi M."/>
            <person name="Yano K."/>
        </authorList>
    </citation>
    <scope>NUCLEOTIDE SEQUENCE [GENOMIC DNA]</scope>
    <source>
        <strain>BE-81</strain>
    </source>
</reference>
<dbReference type="EC" id="1.18.1.3"/>
<dbReference type="EMBL" id="M17904">
    <property type="status" value="NOT_ANNOTATED_CDS"/>
    <property type="molecule type" value="Genomic_DNA"/>
</dbReference>
<dbReference type="PIR" id="D36516">
    <property type="entry name" value="D36516"/>
</dbReference>
<dbReference type="SMR" id="P0C621"/>
<dbReference type="UniPathway" id="UPA00273"/>
<dbReference type="GO" id="GO:0005737">
    <property type="term" value="C:cytoplasm"/>
    <property type="evidence" value="ECO:0007669"/>
    <property type="project" value="TreeGrafter"/>
</dbReference>
<dbReference type="GO" id="GO:0008860">
    <property type="term" value="F:ferredoxin-NAD+ reductase activity"/>
    <property type="evidence" value="ECO:0007669"/>
    <property type="project" value="UniProtKB-EC"/>
</dbReference>
<dbReference type="GO" id="GO:0016651">
    <property type="term" value="F:oxidoreductase activity, acting on NAD(P)H"/>
    <property type="evidence" value="ECO:0007669"/>
    <property type="project" value="TreeGrafter"/>
</dbReference>
<dbReference type="GO" id="GO:0042203">
    <property type="term" value="P:toluene catabolic process"/>
    <property type="evidence" value="ECO:0007669"/>
    <property type="project" value="UniProtKB-UniPathway"/>
</dbReference>
<dbReference type="Gene3D" id="3.30.390.30">
    <property type="match status" value="1"/>
</dbReference>
<dbReference type="Gene3D" id="3.50.50.60">
    <property type="entry name" value="FAD/NAD(P)-binding domain"/>
    <property type="match status" value="2"/>
</dbReference>
<dbReference type="InterPro" id="IPR050446">
    <property type="entry name" value="FAD-oxidoreductase/Apoptosis"/>
</dbReference>
<dbReference type="InterPro" id="IPR036188">
    <property type="entry name" value="FAD/NAD-bd_sf"/>
</dbReference>
<dbReference type="InterPro" id="IPR023753">
    <property type="entry name" value="FAD/NAD-binding_dom"/>
</dbReference>
<dbReference type="InterPro" id="IPR016156">
    <property type="entry name" value="FAD/NAD-linked_Rdtase_dimer_sf"/>
</dbReference>
<dbReference type="InterPro" id="IPR028202">
    <property type="entry name" value="Reductase_C"/>
</dbReference>
<dbReference type="PANTHER" id="PTHR43557">
    <property type="entry name" value="APOPTOSIS-INDUCING FACTOR 1"/>
    <property type="match status" value="1"/>
</dbReference>
<dbReference type="PANTHER" id="PTHR43557:SF2">
    <property type="entry name" value="RIESKE DOMAIN-CONTAINING PROTEIN-RELATED"/>
    <property type="match status" value="1"/>
</dbReference>
<dbReference type="Pfam" id="PF07992">
    <property type="entry name" value="Pyr_redox_2"/>
    <property type="match status" value="1"/>
</dbReference>
<dbReference type="Pfam" id="PF14759">
    <property type="entry name" value="Reductase_C"/>
    <property type="match status" value="1"/>
</dbReference>
<dbReference type="PRINTS" id="PR00368">
    <property type="entry name" value="FADPNR"/>
</dbReference>
<dbReference type="PRINTS" id="PR00411">
    <property type="entry name" value="PNDRDTASEI"/>
</dbReference>
<dbReference type="SUPFAM" id="SSF51905">
    <property type="entry name" value="FAD/NAD(P)-binding domain"/>
    <property type="match status" value="2"/>
</dbReference>
<dbReference type="SUPFAM" id="SSF55424">
    <property type="entry name" value="FAD/NAD-linked reductases, dimerisation (C-terminal) domain"/>
    <property type="match status" value="1"/>
</dbReference>
<protein>
    <recommendedName>
        <fullName>Toluene 1,2-dioxygenase system ferredoxin--NAD(+) reductase component</fullName>
        <ecNumber>1.18.1.3</ecNumber>
    </recommendedName>
</protein>
<name>TODA_PSEPU</name>
<feature type="initiator methionine" description="Removed" evidence="1">
    <location>
        <position position="1"/>
    </location>
</feature>
<feature type="chain" id="PRO_0000167654" description="Toluene 1,2-dioxygenase system ferredoxin--NAD(+) reductase component">
    <location>
        <begin position="2"/>
        <end position="409"/>
    </location>
</feature>
<feature type="binding site" evidence="2">
    <location>
        <begin position="4"/>
        <end position="35"/>
    </location>
    <ligand>
        <name>FAD</name>
        <dbReference type="ChEBI" id="CHEBI:57692"/>
    </ligand>
</feature>
<feature type="binding site" evidence="2">
    <location>
        <begin position="145"/>
        <end position="173"/>
    </location>
    <ligand>
        <name>NAD(+)</name>
        <dbReference type="ChEBI" id="CHEBI:57540"/>
    </ligand>
</feature>
<gene>
    <name type="primary">todA</name>
</gene>
<keyword id="KW-0058">Aromatic hydrocarbons catabolism</keyword>
<keyword id="KW-0274">FAD</keyword>
<keyword id="KW-0285">Flavoprotein</keyword>
<keyword id="KW-0520">NAD</keyword>
<keyword id="KW-0560">Oxidoreductase</keyword>
<comment type="function">
    <text>Part of the electron transfer component of toluene 1,2-dioxygenase, transfers electrons from ferredoxin (TodB) to NADH.</text>
</comment>
<comment type="catalytic activity">
    <reaction>
        <text>2 reduced [2Fe-2S]-[ferredoxin] + NAD(+) + H(+) = 2 oxidized [2Fe-2S]-[ferredoxin] + NADH</text>
        <dbReference type="Rhea" id="RHEA:16521"/>
        <dbReference type="Rhea" id="RHEA-COMP:10000"/>
        <dbReference type="Rhea" id="RHEA-COMP:10001"/>
        <dbReference type="ChEBI" id="CHEBI:15378"/>
        <dbReference type="ChEBI" id="CHEBI:33737"/>
        <dbReference type="ChEBI" id="CHEBI:33738"/>
        <dbReference type="ChEBI" id="CHEBI:57540"/>
        <dbReference type="ChEBI" id="CHEBI:57945"/>
        <dbReference type="EC" id="1.18.1.3"/>
    </reaction>
</comment>
<comment type="cofactor">
    <cofactor>
        <name>FAD</name>
        <dbReference type="ChEBI" id="CHEBI:57692"/>
    </cofactor>
</comment>
<comment type="pathway">
    <text>Xenobiotic degradation; toluene degradation.</text>
</comment>
<comment type="subunit">
    <text>This dioxygenase system consists of four proteins: the two subunits of the hydroxylase component (todC1 and todC2), a ferredoxin (TodB) and a ferredoxin reductase (TodA).</text>
</comment>
<comment type="similarity">
    <text evidence="3">Belongs to the bacterial ring-hydroxylating dioxygenase ferredoxin reductase family.</text>
</comment>